<comment type="function">
    <text evidence="1 9 10">Involved in transcriptional activation and repression of select genes by chromatin remodeling (alteration of DNA-nucleosome topology). Required for the stability of the SWI/SNF chromatin remodeling complex SWI/SNF-B (PBAF). Acts as a negative regulator of cell proliferation.</text>
</comment>
<comment type="subunit">
    <text evidence="1 6 9 10">Component of the SWI/SNF-B (PBAF) chromatin remodeling complex, at least composed of SMARCA4/BRG1, SMARCB1/BAF47/SNF5, ACTL6A/BAF53A or ACTL6B/BAF53B, SMARCE1/BAF57, SMARCD1/BAF60A, SMARCD2/BAF60B, perhaps SMARCD3/BAF60C, SMARCC1/BAF155, SMARCC2/BAF170, PBRM1/BAF180, ARID2/BAF200 and actin. Interacts with PHF10/BAF45A (By similarity). Interacts with acetylated 'Lys-14' of histone H3 (H3K14ac), and may also interact with other acetylated or methylated Lys residues on histone H3 (By similarity).</text>
</comment>
<comment type="subcellular location">
    <subcellularLocation>
        <location evidence="3">Nucleus</location>
    </subcellularLocation>
</comment>
<comment type="alternative products">
    <event type="alternative splicing"/>
    <isoform>
        <id>Q8BSQ9-1</id>
        <name>1</name>
        <sequence type="displayed"/>
    </isoform>
    <isoform>
        <id>Q8BSQ9-2</id>
        <name>2</name>
        <sequence type="described" ref="VSP_035471"/>
    </isoform>
</comment>
<comment type="developmental stage">
    <text evidence="6">Expressed ubiquitously throughout the developing spinal cord, brain and other embryonic tissues at 10.5 dpc-16.5 dpc.</text>
</comment>
<comment type="sequence caution" evidence="11">
    <conflict type="miscellaneous discrepancy">
        <sequence resource="EMBL-CDS" id="AAH29037"/>
    </conflict>
    <text>Contaminating sequence. Potential poly-A sequence.</text>
</comment>
<comment type="sequence caution" evidence="11">
    <conflict type="miscellaneous discrepancy">
        <sequence resource="EMBL-CDS" id="AAH55456"/>
    </conflict>
    <text>Contaminating sequence.</text>
</comment>
<comment type="sequence caution" evidence="11">
    <conflict type="erroneous initiation">
        <sequence resource="EMBL-CDS" id="AAH55708"/>
    </conflict>
    <text>Truncated N-terminus.</text>
</comment>
<dbReference type="EMBL" id="AC154446">
    <property type="status" value="NOT_ANNOTATED_CDS"/>
    <property type="molecule type" value="Genomic_DNA"/>
</dbReference>
<dbReference type="EMBL" id="AC154727">
    <property type="status" value="NOT_ANNOTATED_CDS"/>
    <property type="molecule type" value="Genomic_DNA"/>
</dbReference>
<dbReference type="EMBL" id="BC023452">
    <property type="protein sequence ID" value="AAH23452.1"/>
    <property type="molecule type" value="mRNA"/>
</dbReference>
<dbReference type="EMBL" id="BC029037">
    <property type="protein sequence ID" value="AAH29037.1"/>
    <property type="status" value="ALT_TERM"/>
    <property type="molecule type" value="mRNA"/>
</dbReference>
<dbReference type="EMBL" id="BC055456">
    <property type="protein sequence ID" value="AAH55456.1"/>
    <property type="status" value="ALT_TERM"/>
    <property type="molecule type" value="mRNA"/>
</dbReference>
<dbReference type="EMBL" id="BC055708">
    <property type="protein sequence ID" value="AAH55708.1"/>
    <property type="status" value="ALT_INIT"/>
    <property type="molecule type" value="mRNA"/>
</dbReference>
<dbReference type="EMBL" id="BF451491">
    <property type="status" value="NOT_ANNOTATED_CDS"/>
    <property type="molecule type" value="mRNA"/>
</dbReference>
<dbReference type="EMBL" id="CN530699">
    <property type="status" value="NOT_ANNOTATED_CDS"/>
    <property type="molecule type" value="mRNA"/>
</dbReference>
<dbReference type="EMBL" id="AK009582">
    <property type="protein sequence ID" value="BAB26374.2"/>
    <property type="molecule type" value="mRNA"/>
</dbReference>
<dbReference type="EMBL" id="AK030781">
    <property type="protein sequence ID" value="BAC27136.2"/>
    <property type="molecule type" value="mRNA"/>
</dbReference>
<dbReference type="EMBL" id="AK030252">
    <property type="status" value="NOT_ANNOTATED_CDS"/>
    <property type="molecule type" value="mRNA"/>
</dbReference>
<dbReference type="EMBL" id="AK166588">
    <property type="status" value="NOT_ANNOTATED_CDS"/>
    <property type="molecule type" value="mRNA"/>
</dbReference>
<dbReference type="PDB" id="2YQD">
    <property type="method" value="NMR"/>
    <property type="chains" value="A=650-762"/>
</dbReference>
<dbReference type="PDBsum" id="2YQD"/>
<dbReference type="SMR" id="Q8BSQ9"/>
<dbReference type="ComplexPortal" id="CPX-1248">
    <property type="entry name" value="Polybromo-associated SWI/SNF ATP-dependent chromatin remodeling complex, ACTL6A variant"/>
</dbReference>
<dbReference type="ComplexPortal" id="CPX-1250">
    <property type="entry name" value="Polybromo-associated SWI/SNF ATP-dependent chromatin remodeling complex, ACTL6B variant"/>
</dbReference>
<dbReference type="DIP" id="DIP-48885N"/>
<dbReference type="FunCoup" id="Q8BSQ9">
    <property type="interactions" value="4689"/>
</dbReference>
<dbReference type="IntAct" id="Q8BSQ9">
    <property type="interactions" value="6"/>
</dbReference>
<dbReference type="MINT" id="Q8BSQ9"/>
<dbReference type="STRING" id="10090.ENSMUSP00000107727"/>
<dbReference type="GlyGen" id="Q8BSQ9">
    <property type="glycosylation" value="2 sites, 1 N-linked glycan (1 site)"/>
</dbReference>
<dbReference type="iPTMnet" id="Q8BSQ9"/>
<dbReference type="PhosphoSitePlus" id="Q8BSQ9"/>
<dbReference type="jPOST" id="Q8BSQ9"/>
<dbReference type="PaxDb" id="10090-ENSMUSP00000107727"/>
<dbReference type="PeptideAtlas" id="Q8BSQ9"/>
<dbReference type="ProteomicsDB" id="294334">
    <molecule id="Q8BSQ9-1"/>
</dbReference>
<dbReference type="ProteomicsDB" id="294335">
    <molecule id="Q8BSQ9-2"/>
</dbReference>
<dbReference type="Pumba" id="Q8BSQ9"/>
<dbReference type="Antibodypedia" id="2905">
    <property type="antibodies" value="195 antibodies from 29 providers"/>
</dbReference>
<dbReference type="Ensembl" id="ENSMUST00000112094.8">
    <molecule id="Q8BSQ9-2"/>
    <property type="protein sequence ID" value="ENSMUSP00000107723.2"/>
    <property type="gene ID" value="ENSMUSG00000042323.18"/>
</dbReference>
<dbReference type="Ensembl" id="ENSMUST00000112095.8">
    <molecule id="Q8BSQ9-1"/>
    <property type="protein sequence ID" value="ENSMUSP00000107724.2"/>
    <property type="gene ID" value="ENSMUSG00000042323.18"/>
</dbReference>
<dbReference type="UCSC" id="uc007swl.1">
    <molecule id="Q8BSQ9-1"/>
    <property type="organism name" value="mouse"/>
</dbReference>
<dbReference type="UCSC" id="uc007swm.1">
    <molecule id="Q8BSQ9-2"/>
    <property type="organism name" value="mouse"/>
</dbReference>
<dbReference type="AGR" id="MGI:1923998"/>
<dbReference type="MGI" id="MGI:1923998">
    <property type="gene designation" value="Pbrm1"/>
</dbReference>
<dbReference type="VEuPathDB" id="HostDB:ENSMUSG00000042323"/>
<dbReference type="eggNOG" id="KOG1827">
    <property type="taxonomic scope" value="Eukaryota"/>
</dbReference>
<dbReference type="GeneTree" id="ENSGT00390000003017"/>
<dbReference type="InParanoid" id="Q8BSQ9"/>
<dbReference type="Reactome" id="R-MMU-3214858">
    <property type="pathway name" value="RMTs methylate histone arginines"/>
</dbReference>
<dbReference type="Reactome" id="R-MMU-8939243">
    <property type="pathway name" value="RUNX1 interacts with co-factors whose precise effect on RUNX1 targets is not known"/>
</dbReference>
<dbReference type="ChiTaRS" id="Pbrm1">
    <property type="organism name" value="mouse"/>
</dbReference>
<dbReference type="EvolutionaryTrace" id="Q8BSQ9"/>
<dbReference type="PRO" id="PR:Q8BSQ9"/>
<dbReference type="Proteomes" id="UP000000589">
    <property type="component" value="Chromosome 14"/>
</dbReference>
<dbReference type="RNAct" id="Q8BSQ9">
    <property type="molecule type" value="protein"/>
</dbReference>
<dbReference type="Bgee" id="ENSMUSG00000042323">
    <property type="expression patterns" value="Expressed in rostral migratory stream and 264 other cell types or tissues"/>
</dbReference>
<dbReference type="ExpressionAtlas" id="Q8BSQ9">
    <property type="expression patterns" value="baseline and differential"/>
</dbReference>
<dbReference type="GO" id="GO:0000785">
    <property type="term" value="C:chromatin"/>
    <property type="evidence" value="ECO:0000303"/>
    <property type="project" value="ComplexPortal"/>
</dbReference>
<dbReference type="GO" id="GO:0000776">
    <property type="term" value="C:kinetochore"/>
    <property type="evidence" value="ECO:0000314"/>
    <property type="project" value="MGI"/>
</dbReference>
<dbReference type="GO" id="GO:0016363">
    <property type="term" value="C:nuclear matrix"/>
    <property type="evidence" value="ECO:0000303"/>
    <property type="project" value="ComplexPortal"/>
</dbReference>
<dbReference type="GO" id="GO:0005634">
    <property type="term" value="C:nucleus"/>
    <property type="evidence" value="ECO:0000305"/>
    <property type="project" value="MGI"/>
</dbReference>
<dbReference type="GO" id="GO:0016586">
    <property type="term" value="C:RSC-type complex"/>
    <property type="evidence" value="ECO:0000303"/>
    <property type="project" value="ComplexPortal"/>
</dbReference>
<dbReference type="GO" id="GO:0003682">
    <property type="term" value="F:chromatin binding"/>
    <property type="evidence" value="ECO:0000314"/>
    <property type="project" value="MGI"/>
</dbReference>
<dbReference type="GO" id="GO:0003677">
    <property type="term" value="F:DNA binding"/>
    <property type="evidence" value="ECO:0007669"/>
    <property type="project" value="UniProtKB-KW"/>
</dbReference>
<dbReference type="GO" id="GO:0001825">
    <property type="term" value="P:blastocyst formation"/>
    <property type="evidence" value="ECO:0000315"/>
    <property type="project" value="MGI"/>
</dbReference>
<dbReference type="GO" id="GO:0001974">
    <property type="term" value="P:blood vessel remodeling"/>
    <property type="evidence" value="ECO:0000304"/>
    <property type="project" value="DFLAT"/>
</dbReference>
<dbReference type="GO" id="GO:0060948">
    <property type="term" value="P:cardiac vascular smooth muscle cell development"/>
    <property type="evidence" value="ECO:0000304"/>
    <property type="project" value="DFLAT"/>
</dbReference>
<dbReference type="GO" id="GO:0006338">
    <property type="term" value="P:chromatin remodeling"/>
    <property type="evidence" value="ECO:0000303"/>
    <property type="project" value="ComplexPortal"/>
</dbReference>
<dbReference type="GO" id="GO:0003349">
    <property type="term" value="P:epicardium-derived cardiac endothelial cell differentiation"/>
    <property type="evidence" value="ECO:0000304"/>
    <property type="project" value="DFLAT"/>
</dbReference>
<dbReference type="GO" id="GO:0007507">
    <property type="term" value="P:heart development"/>
    <property type="evidence" value="ECO:0000315"/>
    <property type="project" value="MGI"/>
</dbReference>
<dbReference type="GO" id="GO:0003007">
    <property type="term" value="P:heart morphogenesis"/>
    <property type="evidence" value="ECO:0000304"/>
    <property type="project" value="DFLAT"/>
</dbReference>
<dbReference type="GO" id="GO:0008285">
    <property type="term" value="P:negative regulation of cell population proliferation"/>
    <property type="evidence" value="ECO:0000250"/>
    <property type="project" value="UniProtKB"/>
</dbReference>
<dbReference type="GO" id="GO:0001890">
    <property type="term" value="P:placenta development"/>
    <property type="evidence" value="ECO:0000315"/>
    <property type="project" value="MGI"/>
</dbReference>
<dbReference type="GO" id="GO:0045597">
    <property type="term" value="P:positive regulation of cell differentiation"/>
    <property type="evidence" value="ECO:0000303"/>
    <property type="project" value="ComplexPortal"/>
</dbReference>
<dbReference type="GO" id="GO:0045893">
    <property type="term" value="P:positive regulation of DNA-templated transcription"/>
    <property type="evidence" value="ECO:0000304"/>
    <property type="project" value="DFLAT"/>
</dbReference>
<dbReference type="GO" id="GO:2000781">
    <property type="term" value="P:positive regulation of double-strand break repair"/>
    <property type="evidence" value="ECO:0000303"/>
    <property type="project" value="ComplexPortal"/>
</dbReference>
<dbReference type="GO" id="GO:0045663">
    <property type="term" value="P:positive regulation of myoblast differentiation"/>
    <property type="evidence" value="ECO:0000303"/>
    <property type="project" value="ComplexPortal"/>
</dbReference>
<dbReference type="GO" id="GO:0045582">
    <property type="term" value="P:positive regulation of T cell differentiation"/>
    <property type="evidence" value="ECO:0000303"/>
    <property type="project" value="ComplexPortal"/>
</dbReference>
<dbReference type="GO" id="GO:0070316">
    <property type="term" value="P:regulation of G0 to G1 transition"/>
    <property type="evidence" value="ECO:0000303"/>
    <property type="project" value="ComplexPortal"/>
</dbReference>
<dbReference type="GO" id="GO:2000045">
    <property type="term" value="P:regulation of G1/S transition of mitotic cell cycle"/>
    <property type="evidence" value="ECO:0000303"/>
    <property type="project" value="ComplexPortal"/>
</dbReference>
<dbReference type="GO" id="GO:0030071">
    <property type="term" value="P:regulation of mitotic metaphase/anaphase transition"/>
    <property type="evidence" value="ECO:0000303"/>
    <property type="project" value="ComplexPortal"/>
</dbReference>
<dbReference type="GO" id="GO:2000819">
    <property type="term" value="P:regulation of nucleotide-excision repair"/>
    <property type="evidence" value="ECO:0000303"/>
    <property type="project" value="ComplexPortal"/>
</dbReference>
<dbReference type="GO" id="GO:0006357">
    <property type="term" value="P:regulation of transcription by RNA polymerase II"/>
    <property type="evidence" value="ECO:0000303"/>
    <property type="project" value="ComplexPortal"/>
</dbReference>
<dbReference type="GO" id="GO:0060979">
    <property type="term" value="P:vasculogenesis involved in coronary vascular morphogenesis"/>
    <property type="evidence" value="ECO:0000304"/>
    <property type="project" value="DFLAT"/>
</dbReference>
<dbReference type="CDD" id="cd04717">
    <property type="entry name" value="BAH_polybromo"/>
    <property type="match status" value="2"/>
</dbReference>
<dbReference type="CDD" id="cd05524">
    <property type="entry name" value="Bromo_polybromo_I"/>
    <property type="match status" value="1"/>
</dbReference>
<dbReference type="CDD" id="cd05517">
    <property type="entry name" value="Bromo_polybromo_II"/>
    <property type="match status" value="1"/>
</dbReference>
<dbReference type="CDD" id="cd05520">
    <property type="entry name" value="Bromo_polybromo_III"/>
    <property type="match status" value="1"/>
</dbReference>
<dbReference type="CDD" id="cd05518">
    <property type="entry name" value="Bromo_polybromo_IV"/>
    <property type="match status" value="1"/>
</dbReference>
<dbReference type="CDD" id="cd05515">
    <property type="entry name" value="Bromo_polybromo_V"/>
    <property type="match status" value="1"/>
</dbReference>
<dbReference type="CDD" id="cd05526">
    <property type="entry name" value="Bromo_polybromo_VI"/>
    <property type="match status" value="1"/>
</dbReference>
<dbReference type="CDD" id="cd21984">
    <property type="entry name" value="HMG-box_PB1"/>
    <property type="match status" value="1"/>
</dbReference>
<dbReference type="FunFam" id="1.20.920.10:FF:000009">
    <property type="entry name" value="Protein polybromo-1 isoform 1"/>
    <property type="match status" value="1"/>
</dbReference>
<dbReference type="FunFam" id="1.20.920.10:FF:000011">
    <property type="entry name" value="Protein polybromo-1 isoform 1"/>
    <property type="match status" value="1"/>
</dbReference>
<dbReference type="FunFam" id="1.20.920.10:FF:000013">
    <property type="entry name" value="Protein polybromo-1 isoform 1"/>
    <property type="match status" value="1"/>
</dbReference>
<dbReference type="FunFam" id="1.20.920.10:FF:000006">
    <property type="entry name" value="protein polybromo-1 isoform X1"/>
    <property type="match status" value="1"/>
</dbReference>
<dbReference type="FunFam" id="1.20.920.10:FF:000010">
    <property type="entry name" value="protein polybromo-1 isoform X3"/>
    <property type="match status" value="1"/>
</dbReference>
<dbReference type="FunFam" id="1.20.920.10:FF:000015">
    <property type="entry name" value="protein polybromo-1 isoform X3"/>
    <property type="match status" value="1"/>
</dbReference>
<dbReference type="FunFam" id="2.30.30.490:FF:000002">
    <property type="entry name" value="protein polybromo-1 isoform X3"/>
    <property type="match status" value="1"/>
</dbReference>
<dbReference type="FunFam" id="2.30.30.490:FF:000003">
    <property type="entry name" value="protein polybromo-1 isoform X3"/>
    <property type="match status" value="1"/>
</dbReference>
<dbReference type="Gene3D" id="2.30.30.490">
    <property type="match status" value="2"/>
</dbReference>
<dbReference type="Gene3D" id="1.20.920.10">
    <property type="entry name" value="Bromodomain-like"/>
    <property type="match status" value="6"/>
</dbReference>
<dbReference type="InterPro" id="IPR001025">
    <property type="entry name" value="BAH_dom"/>
</dbReference>
<dbReference type="InterPro" id="IPR043151">
    <property type="entry name" value="BAH_sf"/>
</dbReference>
<dbReference type="InterPro" id="IPR001487">
    <property type="entry name" value="Bromodomain"/>
</dbReference>
<dbReference type="InterPro" id="IPR036427">
    <property type="entry name" value="Bromodomain-like_sf"/>
</dbReference>
<dbReference type="InterPro" id="IPR018359">
    <property type="entry name" value="Bromodomain_CS"/>
</dbReference>
<dbReference type="InterPro" id="IPR009071">
    <property type="entry name" value="HMG_box_dom"/>
</dbReference>
<dbReference type="InterPro" id="IPR036910">
    <property type="entry name" value="HMG_box_dom_sf"/>
</dbReference>
<dbReference type="InterPro" id="IPR037968">
    <property type="entry name" value="PBRM1_BD5"/>
</dbReference>
<dbReference type="InterPro" id="IPR037382">
    <property type="entry name" value="Rsc/polybromo"/>
</dbReference>
<dbReference type="PANTHER" id="PTHR16062:SF19">
    <property type="entry name" value="PROTEIN POLYBROMO-1"/>
    <property type="match status" value="1"/>
</dbReference>
<dbReference type="PANTHER" id="PTHR16062">
    <property type="entry name" value="SWI/SNF-RELATED"/>
    <property type="match status" value="1"/>
</dbReference>
<dbReference type="Pfam" id="PF01426">
    <property type="entry name" value="BAH"/>
    <property type="match status" value="2"/>
</dbReference>
<dbReference type="Pfam" id="PF00439">
    <property type="entry name" value="Bromodomain"/>
    <property type="match status" value="6"/>
</dbReference>
<dbReference type="Pfam" id="PF00505">
    <property type="entry name" value="HMG_box"/>
    <property type="match status" value="1"/>
</dbReference>
<dbReference type="PRINTS" id="PR00503">
    <property type="entry name" value="BROMODOMAIN"/>
</dbReference>
<dbReference type="SMART" id="SM00439">
    <property type="entry name" value="BAH"/>
    <property type="match status" value="2"/>
</dbReference>
<dbReference type="SMART" id="SM00297">
    <property type="entry name" value="BROMO"/>
    <property type="match status" value="6"/>
</dbReference>
<dbReference type="SMART" id="SM00398">
    <property type="entry name" value="HMG"/>
    <property type="match status" value="1"/>
</dbReference>
<dbReference type="SUPFAM" id="SSF47370">
    <property type="entry name" value="Bromodomain"/>
    <property type="match status" value="6"/>
</dbReference>
<dbReference type="SUPFAM" id="SSF47095">
    <property type="entry name" value="HMG-box"/>
    <property type="match status" value="1"/>
</dbReference>
<dbReference type="PROSITE" id="PS51038">
    <property type="entry name" value="BAH"/>
    <property type="match status" value="2"/>
</dbReference>
<dbReference type="PROSITE" id="PS00633">
    <property type="entry name" value="BROMODOMAIN_1"/>
    <property type="match status" value="5"/>
</dbReference>
<dbReference type="PROSITE" id="PS50014">
    <property type="entry name" value="BROMODOMAIN_2"/>
    <property type="match status" value="6"/>
</dbReference>
<dbReference type="PROSITE" id="PS50118">
    <property type="entry name" value="HMG_BOX_2"/>
    <property type="match status" value="1"/>
</dbReference>
<feature type="chain" id="PRO_0000351134" description="Protein polybromo-1">
    <location>
        <begin position="1"/>
        <end position="1634"/>
    </location>
</feature>
<feature type="domain" description="Bromo 1" evidence="2">
    <location>
        <begin position="41"/>
        <end position="151"/>
    </location>
</feature>
<feature type="domain" description="Bromo 2" evidence="2">
    <location>
        <begin position="177"/>
        <end position="287"/>
    </location>
</feature>
<feature type="domain" description="Bromo 3" evidence="2">
    <location>
        <begin position="381"/>
        <end position="487"/>
    </location>
</feature>
<feature type="domain" description="Bromo 4" evidence="2">
    <location>
        <begin position="518"/>
        <end position="625"/>
    </location>
</feature>
<feature type="domain" description="Bromo 5" evidence="2">
    <location>
        <begin position="653"/>
        <end position="763"/>
    </location>
</feature>
<feature type="domain" description="Bromo 6" evidence="2">
    <location>
        <begin position="769"/>
        <end position="879"/>
    </location>
</feature>
<feature type="domain" description="BAH 1" evidence="4">
    <location>
        <begin position="956"/>
        <end position="1074"/>
    </location>
</feature>
<feature type="domain" description="BAH 2" evidence="4">
    <location>
        <begin position="1156"/>
        <end position="1272"/>
    </location>
</feature>
<feature type="DNA-binding region" description="HMG box" evidence="3">
    <location>
        <begin position="1379"/>
        <end position="1447"/>
    </location>
</feature>
<feature type="region of interest" description="Disordered" evidence="5">
    <location>
        <begin position="1"/>
        <end position="39"/>
    </location>
</feature>
<feature type="region of interest" description="Disordered" evidence="5">
    <location>
        <begin position="155"/>
        <end position="179"/>
    </location>
</feature>
<feature type="region of interest" description="Disordered" evidence="5">
    <location>
        <begin position="487"/>
        <end position="517"/>
    </location>
</feature>
<feature type="region of interest" description="Disordered" evidence="5">
    <location>
        <begin position="625"/>
        <end position="653"/>
    </location>
</feature>
<feature type="region of interest" description="Disordered" evidence="5">
    <location>
        <begin position="901"/>
        <end position="942"/>
    </location>
</feature>
<feature type="region of interest" description="Disordered" evidence="5">
    <location>
        <begin position="1106"/>
        <end position="1129"/>
    </location>
</feature>
<feature type="region of interest" description="Disordered" evidence="5">
    <location>
        <begin position="1354"/>
        <end position="1378"/>
    </location>
</feature>
<feature type="compositionally biased region" description="Acidic residues" evidence="5">
    <location>
        <begin position="157"/>
        <end position="167"/>
    </location>
</feature>
<feature type="compositionally biased region" description="Polar residues" evidence="5">
    <location>
        <begin position="499"/>
        <end position="508"/>
    </location>
</feature>
<feature type="compositionally biased region" description="Basic and acidic residues" evidence="5">
    <location>
        <begin position="901"/>
        <end position="933"/>
    </location>
</feature>
<feature type="modified residue" description="Phosphoserine" evidence="1">
    <location>
        <position position="10"/>
    </location>
</feature>
<feature type="modified residue" description="Phosphoserine" evidence="14">
    <location>
        <position position="39"/>
    </location>
</feature>
<feature type="modified residue" description="Phosphoserine" evidence="1">
    <location>
        <position position="131"/>
    </location>
</feature>
<feature type="modified residue" description="Phosphotyrosine" evidence="1">
    <location>
        <position position="134"/>
    </location>
</feature>
<feature type="modified residue" description="Phosphoserine" evidence="1">
    <location>
        <position position="178"/>
    </location>
</feature>
<feature type="modified residue" description="Phosphoserine" evidence="1">
    <location>
        <position position="319"/>
    </location>
</feature>
<feature type="modified residue" description="Phosphoserine" evidence="12 14">
    <location>
        <position position="353"/>
    </location>
</feature>
<feature type="modified residue" description="Phosphoserine" evidence="12 14">
    <location>
        <position position="355"/>
    </location>
</feature>
<feature type="modified residue" description="Phosphoserine" evidence="1">
    <location>
        <position position="371"/>
    </location>
</feature>
<feature type="modified residue" description="Phosphoserine" evidence="1">
    <location>
        <position position="375"/>
    </location>
</feature>
<feature type="modified residue" description="N6-acetyllysine" evidence="15">
    <location>
        <position position="414"/>
    </location>
</feature>
<feature type="modified residue" description="Phosphoserine" evidence="14">
    <location>
        <position position="498"/>
    </location>
</feature>
<feature type="modified residue" description="Phosphoserine" evidence="1">
    <location>
        <position position="509"/>
    </location>
</feature>
<feature type="modified residue" description="Phosphoserine" evidence="14">
    <location>
        <position position="636"/>
    </location>
</feature>
<feature type="modified residue" description="Phosphoserine" evidence="1">
    <location>
        <position position="648"/>
    </location>
</feature>
<feature type="modified residue" description="Phosphoserine" evidence="1">
    <location>
        <position position="689"/>
    </location>
</feature>
<feature type="modified residue" description="Phosphoserine" evidence="1">
    <location>
        <position position="948"/>
    </location>
</feature>
<feature type="modified residue" description="Phosphoserine" evidence="1">
    <location>
        <position position="987"/>
    </location>
</feature>
<feature type="modified residue" description="Phosphotyrosine" evidence="13">
    <location>
        <position position="1289"/>
    </location>
</feature>
<feature type="modified residue" description="Phosphoserine" evidence="1">
    <location>
        <position position="1405"/>
    </location>
</feature>
<feature type="cross-link" description="Glycyl lysine isopeptide (Lys-Gly) (interchain with G-Cter in SUMO2)" evidence="1">
    <location>
        <position position="96"/>
    </location>
</feature>
<feature type="cross-link" description="Glycyl lysine isopeptide (Lys-Gly) (interchain with G-Cter in SUMO2)" evidence="1">
    <location>
        <position position="154"/>
    </location>
</feature>
<feature type="cross-link" description="Glycyl lysine isopeptide (Lys-Gly) (interchain with G-Cter in SUMO2)" evidence="1">
    <location>
        <position position="210"/>
    </location>
</feature>
<feature type="cross-link" description="Glycyl lysine isopeptide (Lys-Gly) (interchain with G-Cter in SUMO2)" evidence="1">
    <location>
        <position position="425"/>
    </location>
</feature>
<feature type="cross-link" description="Glycyl lysine isopeptide (Lys-Gly) (interchain with G-Cter in SUMO2)" evidence="1">
    <location>
        <position position="471"/>
    </location>
</feature>
<feature type="cross-link" description="Glycyl lysine isopeptide (Lys-Gly) (interchain with G-Cter in SUMO2)" evidence="1">
    <location>
        <position position="511"/>
    </location>
</feature>
<feature type="cross-link" description="Glycyl lysine isopeptide (Lys-Gly) (interchain with G-Cter in SUMO2)" evidence="1">
    <location>
        <position position="591"/>
    </location>
</feature>
<feature type="cross-link" description="Glycyl lysine isopeptide (Lys-Gly) (interchain with G-Cter in SUMO2)" evidence="1">
    <location>
        <position position="638"/>
    </location>
</feature>
<feature type="cross-link" description="Glycyl lysine isopeptide (Lys-Gly) (interchain with G-Cter in SUMO2)" evidence="1">
    <location>
        <position position="653"/>
    </location>
</feature>
<feature type="cross-link" description="Glycyl lysine isopeptide (Lys-Gly) (interchain with G-Cter in SUMO2)" evidence="1">
    <location>
        <position position="1106"/>
    </location>
</feature>
<feature type="cross-link" description="Glycyl lysine isopeptide (Lys-Gly) (interchain with G-Cter in SUMO2)" evidence="1">
    <location>
        <position position="1111"/>
    </location>
</feature>
<feature type="cross-link" description="Glycyl lysine isopeptide (Lys-Gly) (interchain with G-Cter in SUMO2)" evidence="1">
    <location>
        <position position="1167"/>
    </location>
</feature>
<feature type="cross-link" description="Glycyl lysine isopeptide (Lys-Gly) (interchain with G-Cter in SUMO1); alternate" evidence="1">
    <location>
        <position position="1293"/>
    </location>
</feature>
<feature type="cross-link" description="Glycyl lysine isopeptide (Lys-Gly) (interchain with G-Cter in SUMO2); alternate" evidence="1">
    <location>
        <position position="1293"/>
    </location>
</feature>
<feature type="cross-link" description="Glycyl lysine isopeptide (Lys-Gly) (interchain with G-Cter in SUMO2)" evidence="1">
    <location>
        <position position="1308"/>
    </location>
</feature>
<feature type="cross-link" description="Glycyl lysine isopeptide (Lys-Gly) (interchain with G-Cter in SUMO2)" evidence="1">
    <location>
        <position position="1398"/>
    </location>
</feature>
<feature type="cross-link" description="Glycyl lysine isopeptide (Lys-Gly) (interchain with G-Cter in SUMO2)" evidence="1">
    <location>
        <position position="1587"/>
    </location>
</feature>
<feature type="cross-link" description="Glycyl lysine isopeptide (Lys-Gly) (interchain with G-Cter in SUMO2)" evidence="1">
    <location>
        <position position="1599"/>
    </location>
</feature>
<feature type="cross-link" description="Glycyl lysine isopeptide (Lys-Gly) (interchain with G-Cter in SUMO2)" evidence="1">
    <location>
        <position position="1601"/>
    </location>
</feature>
<feature type="splice variant" id="VSP_035471" description="In isoform 2." evidence="7 8">
    <original>RTASNLAAARLTGPSHNKSSLGEERNPTSKYYR</original>
    <variation>S</variation>
    <location>
        <begin position="300"/>
        <end position="332"/>
    </location>
</feature>
<feature type="sequence conflict" description="In Ref. 2; AAH23452." evidence="11" ref="2">
    <original>Y</original>
    <variation>K</variation>
    <location>
        <position position="417"/>
    </location>
</feature>
<feature type="sequence conflict" description="In Ref. 3; BAC27136." evidence="11" ref="3">
    <original>D</original>
    <variation>E</variation>
    <location>
        <position position="695"/>
    </location>
</feature>
<feature type="helix" evidence="16">
    <location>
        <begin position="659"/>
        <end position="671"/>
    </location>
</feature>
<feature type="strand" evidence="16">
    <location>
        <begin position="675"/>
        <end position="677"/>
    </location>
</feature>
<feature type="strand" evidence="16">
    <location>
        <begin position="679"/>
        <end position="681"/>
    </location>
</feature>
<feature type="helix" evidence="16">
    <location>
        <begin position="682"/>
        <end position="684"/>
    </location>
</feature>
<feature type="turn" evidence="16">
    <location>
        <begin position="690"/>
        <end position="692"/>
    </location>
</feature>
<feature type="helix" evidence="16">
    <location>
        <begin position="694"/>
        <end position="699"/>
    </location>
</feature>
<feature type="helix" evidence="16">
    <location>
        <begin position="706"/>
        <end position="714"/>
    </location>
</feature>
<feature type="helix" evidence="16">
    <location>
        <begin position="721"/>
        <end position="738"/>
    </location>
</feature>
<feature type="helix" evidence="16">
    <location>
        <begin position="744"/>
        <end position="759"/>
    </location>
</feature>
<name>PB1_MOUSE</name>
<keyword id="KW-0002">3D-structure</keyword>
<keyword id="KW-0007">Acetylation</keyword>
<keyword id="KW-0025">Alternative splicing</keyword>
<keyword id="KW-0103">Bromodomain</keyword>
<keyword id="KW-0156">Chromatin regulator</keyword>
<keyword id="KW-0238">DNA-binding</keyword>
<keyword id="KW-1017">Isopeptide bond</keyword>
<keyword id="KW-0539">Nucleus</keyword>
<keyword id="KW-0597">Phosphoprotein</keyword>
<keyword id="KW-1185">Reference proteome</keyword>
<keyword id="KW-0677">Repeat</keyword>
<keyword id="KW-0804">Transcription</keyword>
<keyword id="KW-0805">Transcription regulation</keyword>
<keyword id="KW-0043">Tumor suppressor</keyword>
<keyword id="KW-0832">Ubl conjugation</keyword>
<evidence type="ECO:0000250" key="1">
    <source>
        <dbReference type="UniProtKB" id="Q86U86"/>
    </source>
</evidence>
<evidence type="ECO:0000255" key="2">
    <source>
        <dbReference type="PROSITE-ProRule" id="PRU00035"/>
    </source>
</evidence>
<evidence type="ECO:0000255" key="3">
    <source>
        <dbReference type="PROSITE-ProRule" id="PRU00267"/>
    </source>
</evidence>
<evidence type="ECO:0000255" key="4">
    <source>
        <dbReference type="PROSITE-ProRule" id="PRU00370"/>
    </source>
</evidence>
<evidence type="ECO:0000256" key="5">
    <source>
        <dbReference type="SAM" id="MobiDB-lite"/>
    </source>
</evidence>
<evidence type="ECO:0000269" key="6">
    <source>
    </source>
</evidence>
<evidence type="ECO:0000303" key="7">
    <source>
    </source>
</evidence>
<evidence type="ECO:0000303" key="8">
    <source>
    </source>
</evidence>
<evidence type="ECO:0000303" key="9">
    <source>
    </source>
</evidence>
<evidence type="ECO:0000303" key="10">
    <source>
    </source>
</evidence>
<evidence type="ECO:0000305" key="11"/>
<evidence type="ECO:0007744" key="12">
    <source>
    </source>
</evidence>
<evidence type="ECO:0007744" key="13">
    <source>
    </source>
</evidence>
<evidence type="ECO:0007744" key="14">
    <source>
    </source>
</evidence>
<evidence type="ECO:0007744" key="15">
    <source>
    </source>
</evidence>
<evidence type="ECO:0007829" key="16">
    <source>
        <dbReference type="PDB" id="2YQD"/>
    </source>
</evidence>
<accession>Q8BSQ9</accession>
<accession>E9QPW1</accession>
<accession>Q05C64</accession>
<accession>Q05CL6</accession>
<accession>Q7TMP1</accession>
<accession>Q7TNU2</accession>
<accession>Q9CV51</accession>
<reference key="1">
    <citation type="journal article" date="2009" name="PLoS Biol.">
        <title>Lineage-specific biology revealed by a finished genome assembly of the mouse.</title>
        <authorList>
            <person name="Church D.M."/>
            <person name="Goodstadt L."/>
            <person name="Hillier L.W."/>
            <person name="Zody M.C."/>
            <person name="Goldstein S."/>
            <person name="She X."/>
            <person name="Bult C.J."/>
            <person name="Agarwala R."/>
            <person name="Cherry J.L."/>
            <person name="DiCuccio M."/>
            <person name="Hlavina W."/>
            <person name="Kapustin Y."/>
            <person name="Meric P."/>
            <person name="Maglott D."/>
            <person name="Birtle Z."/>
            <person name="Marques A.C."/>
            <person name="Graves T."/>
            <person name="Zhou S."/>
            <person name="Teague B."/>
            <person name="Potamousis K."/>
            <person name="Churas C."/>
            <person name="Place M."/>
            <person name="Herschleb J."/>
            <person name="Runnheim R."/>
            <person name="Forrest D."/>
            <person name="Amos-Landgraf J."/>
            <person name="Schwartz D.C."/>
            <person name="Cheng Z."/>
            <person name="Lindblad-Toh K."/>
            <person name="Eichler E.E."/>
            <person name="Ponting C.P."/>
        </authorList>
    </citation>
    <scope>NUCLEOTIDE SEQUENCE [LARGE SCALE GENOMIC DNA]</scope>
    <source>
        <strain>C57BL/6J</strain>
    </source>
</reference>
<reference key="2">
    <citation type="journal article" date="2004" name="Genome Res.">
        <title>The status, quality, and expansion of the NIH full-length cDNA project: the Mammalian Gene Collection (MGC).</title>
        <authorList>
            <consortium name="The MGC Project Team"/>
        </authorList>
    </citation>
    <scope>NUCLEOTIDE SEQUENCE [LARGE SCALE MRNA] (ISOFORMS 1 AND 2)</scope>
    <source>
        <strain>C57BL/6J</strain>
        <strain>Czech II</strain>
        <strain>FVB/N</strain>
        <tissue>Brain</tissue>
        <tissue>Mammary tumor</tissue>
    </source>
</reference>
<reference key="3">
    <citation type="journal article" date="2005" name="Science">
        <title>The transcriptional landscape of the mammalian genome.</title>
        <authorList>
            <person name="Carninci P."/>
            <person name="Kasukawa T."/>
            <person name="Katayama S."/>
            <person name="Gough J."/>
            <person name="Frith M.C."/>
            <person name="Maeda N."/>
            <person name="Oyama R."/>
            <person name="Ravasi T."/>
            <person name="Lenhard B."/>
            <person name="Wells C."/>
            <person name="Kodzius R."/>
            <person name="Shimokawa K."/>
            <person name="Bajic V.B."/>
            <person name="Brenner S.E."/>
            <person name="Batalov S."/>
            <person name="Forrest A.R."/>
            <person name="Zavolan M."/>
            <person name="Davis M.J."/>
            <person name="Wilming L.G."/>
            <person name="Aidinis V."/>
            <person name="Allen J.E."/>
            <person name="Ambesi-Impiombato A."/>
            <person name="Apweiler R."/>
            <person name="Aturaliya R.N."/>
            <person name="Bailey T.L."/>
            <person name="Bansal M."/>
            <person name="Baxter L."/>
            <person name="Beisel K.W."/>
            <person name="Bersano T."/>
            <person name="Bono H."/>
            <person name="Chalk A.M."/>
            <person name="Chiu K.P."/>
            <person name="Choudhary V."/>
            <person name="Christoffels A."/>
            <person name="Clutterbuck D.R."/>
            <person name="Crowe M.L."/>
            <person name="Dalla E."/>
            <person name="Dalrymple B.P."/>
            <person name="de Bono B."/>
            <person name="Della Gatta G."/>
            <person name="di Bernardo D."/>
            <person name="Down T."/>
            <person name="Engstrom P."/>
            <person name="Fagiolini M."/>
            <person name="Faulkner G."/>
            <person name="Fletcher C.F."/>
            <person name="Fukushima T."/>
            <person name="Furuno M."/>
            <person name="Futaki S."/>
            <person name="Gariboldi M."/>
            <person name="Georgii-Hemming P."/>
            <person name="Gingeras T.R."/>
            <person name="Gojobori T."/>
            <person name="Green R.E."/>
            <person name="Gustincich S."/>
            <person name="Harbers M."/>
            <person name="Hayashi Y."/>
            <person name="Hensch T.K."/>
            <person name="Hirokawa N."/>
            <person name="Hill D."/>
            <person name="Huminiecki L."/>
            <person name="Iacono M."/>
            <person name="Ikeo K."/>
            <person name="Iwama A."/>
            <person name="Ishikawa T."/>
            <person name="Jakt M."/>
            <person name="Kanapin A."/>
            <person name="Katoh M."/>
            <person name="Kawasawa Y."/>
            <person name="Kelso J."/>
            <person name="Kitamura H."/>
            <person name="Kitano H."/>
            <person name="Kollias G."/>
            <person name="Krishnan S.P."/>
            <person name="Kruger A."/>
            <person name="Kummerfeld S.K."/>
            <person name="Kurochkin I.V."/>
            <person name="Lareau L.F."/>
            <person name="Lazarevic D."/>
            <person name="Lipovich L."/>
            <person name="Liu J."/>
            <person name="Liuni S."/>
            <person name="McWilliam S."/>
            <person name="Madan Babu M."/>
            <person name="Madera M."/>
            <person name="Marchionni L."/>
            <person name="Matsuda H."/>
            <person name="Matsuzawa S."/>
            <person name="Miki H."/>
            <person name="Mignone F."/>
            <person name="Miyake S."/>
            <person name="Morris K."/>
            <person name="Mottagui-Tabar S."/>
            <person name="Mulder N."/>
            <person name="Nakano N."/>
            <person name="Nakauchi H."/>
            <person name="Ng P."/>
            <person name="Nilsson R."/>
            <person name="Nishiguchi S."/>
            <person name="Nishikawa S."/>
            <person name="Nori F."/>
            <person name="Ohara O."/>
            <person name="Okazaki Y."/>
            <person name="Orlando V."/>
            <person name="Pang K.C."/>
            <person name="Pavan W.J."/>
            <person name="Pavesi G."/>
            <person name="Pesole G."/>
            <person name="Petrovsky N."/>
            <person name="Piazza S."/>
            <person name="Reed J."/>
            <person name="Reid J.F."/>
            <person name="Ring B.Z."/>
            <person name="Ringwald M."/>
            <person name="Rost B."/>
            <person name="Ruan Y."/>
            <person name="Salzberg S.L."/>
            <person name="Sandelin A."/>
            <person name="Schneider C."/>
            <person name="Schoenbach C."/>
            <person name="Sekiguchi K."/>
            <person name="Semple C.A."/>
            <person name="Seno S."/>
            <person name="Sessa L."/>
            <person name="Sheng Y."/>
            <person name="Shibata Y."/>
            <person name="Shimada H."/>
            <person name="Shimada K."/>
            <person name="Silva D."/>
            <person name="Sinclair B."/>
            <person name="Sperling S."/>
            <person name="Stupka E."/>
            <person name="Sugiura K."/>
            <person name="Sultana R."/>
            <person name="Takenaka Y."/>
            <person name="Taki K."/>
            <person name="Tammoja K."/>
            <person name="Tan S.L."/>
            <person name="Tang S."/>
            <person name="Taylor M.S."/>
            <person name="Tegner J."/>
            <person name="Teichmann S.A."/>
            <person name="Ueda H.R."/>
            <person name="van Nimwegen E."/>
            <person name="Verardo R."/>
            <person name="Wei C.L."/>
            <person name="Yagi K."/>
            <person name="Yamanishi H."/>
            <person name="Zabarovsky E."/>
            <person name="Zhu S."/>
            <person name="Zimmer A."/>
            <person name="Hide W."/>
            <person name="Bult C."/>
            <person name="Grimmond S.M."/>
            <person name="Teasdale R.D."/>
            <person name="Liu E.T."/>
            <person name="Brusic V."/>
            <person name="Quackenbush J."/>
            <person name="Wahlestedt C."/>
            <person name="Mattick J.S."/>
            <person name="Hume D.A."/>
            <person name="Kai C."/>
            <person name="Sasaki D."/>
            <person name="Tomaru Y."/>
            <person name="Fukuda S."/>
            <person name="Kanamori-Katayama M."/>
            <person name="Suzuki M."/>
            <person name="Aoki J."/>
            <person name="Arakawa T."/>
            <person name="Iida J."/>
            <person name="Imamura K."/>
            <person name="Itoh M."/>
            <person name="Kato T."/>
            <person name="Kawaji H."/>
            <person name="Kawagashira N."/>
            <person name="Kawashima T."/>
            <person name="Kojima M."/>
            <person name="Kondo S."/>
            <person name="Konno H."/>
            <person name="Nakano K."/>
            <person name="Ninomiya N."/>
            <person name="Nishio T."/>
            <person name="Okada M."/>
            <person name="Plessy C."/>
            <person name="Shibata K."/>
            <person name="Shiraki T."/>
            <person name="Suzuki S."/>
            <person name="Tagami M."/>
            <person name="Waki K."/>
            <person name="Watahiki A."/>
            <person name="Okamura-Oho Y."/>
            <person name="Suzuki H."/>
            <person name="Kawai J."/>
            <person name="Hayashizaki Y."/>
        </authorList>
    </citation>
    <scope>NUCLEOTIDE SEQUENCE [LARGE SCALE MRNA] OF 1-919 (ISOFORM 1)</scope>
    <scope>NUCLEOTIDE SEQUENCE [LARGE SCALE MRNA] OF 205-512 (ISOFORM 2)</scope>
    <source>
        <strain>C57BL/6J</strain>
        <tissue>Embryo</tissue>
        <tissue>Tongue</tissue>
    </source>
</reference>
<reference key="4">
    <citation type="journal article" date="2007" name="J. Immunol.">
        <title>Quantitative time-resolved phosphoproteomic analysis of mast cell signaling.</title>
        <authorList>
            <person name="Cao L."/>
            <person name="Yu K."/>
            <person name="Banh C."/>
            <person name="Nguyen V."/>
            <person name="Ritz A."/>
            <person name="Raphael B.J."/>
            <person name="Kawakami Y."/>
            <person name="Kawakami T."/>
            <person name="Salomon A.R."/>
        </authorList>
    </citation>
    <scope>PHOSPHORYLATION [LARGE SCALE ANALYSIS] AT TYR-1289</scope>
    <scope>IDENTIFICATION BY MASS SPECTROMETRY [LARGE SCALE ANALYSIS]</scope>
    <source>
        <tissue>Mast cell</tissue>
    </source>
</reference>
<reference key="5">
    <citation type="journal article" date="2007" name="Neuron">
        <title>An essential switch in subunit composition of a chromatin remodeling complex during neural development.</title>
        <authorList>
            <person name="Lessard J."/>
            <person name="Wu J.I."/>
            <person name="Ranish J.A."/>
            <person name="Wan M."/>
            <person name="Winslow M.M."/>
            <person name="Staahl B.T."/>
            <person name="Wu H."/>
            <person name="Aebersold R."/>
            <person name="Graef I.A."/>
            <person name="Crabtree G.R."/>
        </authorList>
    </citation>
    <scope>IDENTIFICATION BY MASS SPECTROMETRY</scope>
    <scope>INTERACTION WITH PHF10</scope>
    <scope>DEVELOPMENTAL STAGE</scope>
</reference>
<reference key="6">
    <citation type="journal article" date="2007" name="Proc. Natl. Acad. Sci. U.S.A.">
        <title>Large-scale phosphorylation analysis of mouse liver.</title>
        <authorList>
            <person name="Villen J."/>
            <person name="Beausoleil S.A."/>
            <person name="Gerber S.A."/>
            <person name="Gygi S.P."/>
        </authorList>
    </citation>
    <scope>PHOSPHORYLATION [LARGE SCALE ANALYSIS] AT SER-353 AND SER-355</scope>
    <scope>IDENTIFICATION BY MASS SPECTROMETRY [LARGE SCALE ANALYSIS]</scope>
    <source>
        <tissue>Liver</tissue>
    </source>
</reference>
<reference key="7">
    <citation type="journal article" date="2009" name="Immunity">
        <title>The phagosomal proteome in interferon-gamma-activated macrophages.</title>
        <authorList>
            <person name="Trost M."/>
            <person name="English L."/>
            <person name="Lemieux S."/>
            <person name="Courcelles M."/>
            <person name="Desjardins M."/>
            <person name="Thibault P."/>
        </authorList>
    </citation>
    <scope>IDENTIFICATION BY MASS SPECTROMETRY [LARGE SCALE ANALYSIS]</scope>
</reference>
<reference key="8">
    <citation type="journal article" date="2009" name="Mol. Cell. Proteomics">
        <title>Large scale localization of protein phosphorylation by use of electron capture dissociation mass spectrometry.</title>
        <authorList>
            <person name="Sweet S.M."/>
            <person name="Bailey C.M."/>
            <person name="Cunningham D.L."/>
            <person name="Heath J.K."/>
            <person name="Cooper H.J."/>
        </authorList>
    </citation>
    <scope>IDENTIFICATION BY MASS SPECTROMETRY [LARGE SCALE ANALYSIS]</scope>
    <source>
        <tissue>Embryonic fibroblast</tissue>
    </source>
</reference>
<reference key="9">
    <citation type="journal article" date="2010" name="Cell">
        <title>A tissue-specific atlas of mouse protein phosphorylation and expression.</title>
        <authorList>
            <person name="Huttlin E.L."/>
            <person name="Jedrychowski M.P."/>
            <person name="Elias J.E."/>
            <person name="Goswami T."/>
            <person name="Rad R."/>
            <person name="Beausoleil S.A."/>
            <person name="Villen J."/>
            <person name="Haas W."/>
            <person name="Sowa M.E."/>
            <person name="Gygi S.P."/>
        </authorList>
    </citation>
    <scope>PHOSPHORYLATION [LARGE SCALE ANALYSIS] AT SER-39; SER-353; SER-355; SER-498 AND SER-636</scope>
    <scope>IDENTIFICATION BY MASS SPECTROMETRY [LARGE SCALE ANALYSIS]</scope>
    <source>
        <tissue>Brain</tissue>
        <tissue>Brown adipose tissue</tissue>
        <tissue>Heart</tissue>
        <tissue>Kidney</tissue>
        <tissue>Liver</tissue>
        <tissue>Lung</tissue>
        <tissue>Pancreas</tissue>
        <tissue>Spleen</tissue>
        <tissue>Testis</tissue>
    </source>
</reference>
<reference key="10">
    <citation type="journal article" date="2013" name="Mol. Cell">
        <title>SIRT5-mediated lysine desuccinylation impacts diverse metabolic pathways.</title>
        <authorList>
            <person name="Park J."/>
            <person name="Chen Y."/>
            <person name="Tishkoff D.X."/>
            <person name="Peng C."/>
            <person name="Tan M."/>
            <person name="Dai L."/>
            <person name="Xie Z."/>
            <person name="Zhang Y."/>
            <person name="Zwaans B.M."/>
            <person name="Skinner M.E."/>
            <person name="Lombard D.B."/>
            <person name="Zhao Y."/>
        </authorList>
    </citation>
    <scope>ACETYLATION [LARGE SCALE ANALYSIS] AT LYS-414</scope>
    <scope>IDENTIFICATION BY MASS SPECTROMETRY [LARGE SCALE ANALYSIS]</scope>
    <source>
        <tissue>Embryonic fibroblast</tissue>
    </source>
</reference>
<reference key="11">
    <citation type="journal article" date="2012" name="J. Biol. Chem.">
        <title>SWI/SNF chromatin-remodeling factors: multiscale analyses and diverse functions.</title>
        <authorList>
            <person name="Euskirchen G."/>
            <person name="Auerbach R.K."/>
            <person name="Snyder M."/>
        </authorList>
    </citation>
    <scope>REVIEW ON SWI/SNF CHROMATIN REMODELING COMPLEXES</scope>
</reference>
<reference key="12">
    <citation type="journal article" date="2015" name="Sci. Adv.">
        <title>Mammalian SWI/SNF chromatin remodeling complexes and cancer: Mechanistic insights gained from human genomics.</title>
        <authorList>
            <person name="Kadoch C."/>
            <person name="Crabtree G.R."/>
        </authorList>
    </citation>
    <scope>REVIEW ON SWI/SNF CHROMATIN REMODELING COMPLEXES</scope>
</reference>
<reference key="13">
    <citation type="submission" date="2007-10" db="PDB data bank">
        <title>Solution structure of the fifth bromodomain from mouse polybromo-1.</title>
        <authorList>
            <consortium name="RIKEN structural genomics initiative (RSGI)"/>
        </authorList>
    </citation>
    <scope>STRUCTURE BY NMR OF 646-762</scope>
</reference>
<organism>
    <name type="scientific">Mus musculus</name>
    <name type="common">Mouse</name>
    <dbReference type="NCBI Taxonomy" id="10090"/>
    <lineage>
        <taxon>Eukaryota</taxon>
        <taxon>Metazoa</taxon>
        <taxon>Chordata</taxon>
        <taxon>Craniata</taxon>
        <taxon>Vertebrata</taxon>
        <taxon>Euteleostomi</taxon>
        <taxon>Mammalia</taxon>
        <taxon>Eutheria</taxon>
        <taxon>Euarchontoglires</taxon>
        <taxon>Glires</taxon>
        <taxon>Rodentia</taxon>
        <taxon>Myomorpha</taxon>
        <taxon>Muroidea</taxon>
        <taxon>Muridae</taxon>
        <taxon>Murinae</taxon>
        <taxon>Mus</taxon>
        <taxon>Mus</taxon>
    </lineage>
</organism>
<sequence length="1634" mass="187188">MGSKRRRATSPSSSVSGDFDDGHHSVPTPGPSRKRRRLSNLPTVDPIAVCHELYNTIRDYKDEQGRLLCELFIRAPKRRNQPDYYEVVSQPIDLMKIQQKLKMEEYDDVNLLTADFQLLFNNAKAYYKPDSPEYKAACKLWDLYLRTRNEFVQKGEADDEDDDEDGQDNQGTLADGSSPGYLKEILEQLLEAIVVATNPSGRLISELFQKLPSKVQYPDYYAIIKEPIDLKTIAQRIQNGSYKSIHAMAKDIDLLAKNAKTYNEPGSQVFKDANSIKKIFYMKKAEIEHHEMTKSSLRIRTASNLAAARLTGPSHNKSSLGEERNPTSKYYRNKRAVQGGRLSAITMALQYGSESEEDAALAAARYEEGESEAESITSFMDVSNPFHQLYDTVRSCRNHQGQLIAEPFFHLPSKKKYPDYYQQIKMPISLQQIRTKLKNQEYETLDHLECDLNLMFENAKRYNVPNSAIYKRVLKLQQVMQAKKKELARRDDIEDGDSMISSATSDTGSAKRKSKKNIRKQRMKILFNVVLEAREPGSGRRLCDLFMVKPSKKDYPDYYKIILEPMDLKIIEHNIRNDKYAGEEGMMEDMKLMFRNARHYNEEGSQVYNDAHILEKLLKDKRKELGPLPDDDDMASPKLKLSRKSGVSPKKSKYMTPMQQKLNEVYEAVKNYTDKRGRRLSAIFLRLPSRSELPDYYLTIKKPMDMEKIRSHMMANKYQDIDSMVEDFVMMFNNACTYNEPESLIYKDALVLHKVLLETRRDLEGDEDSHVPNVTLLIQELIHNLFVSVMSHQDDEGRCYSDSLAEIPAVDPNSPNKPPLTFDIIRKNVESNRYRRLDLFQEHMFEVLERARRMNRTDSEIYEDAVELQQFFIRIRDELCKNGEILLSPALSYTTKHLHNDVEKEKKEKLPKEIEEDKLKREEEKREAEKSEDSSGTTGLSGLHRTYSQDCSFKNSMYHVGDYVYVEPAEANLQPHIVCIERLWEDSAGEKWLYGCWFYRPNETFHLATRKFLEKEVFKSDYYNKVPVSKILGKCVVMFVKEYFKLCPENFRDEDVFVCESRYSAKTKSFKKIKLWTMPISSVRFVPRDVPLPVVRVASVFANADKGDDEKNTDNSDDNRAEDNFNLEKEKEDVPVEMSNGEPGCHYFEQLRYNDMWLKVGDCVFIKSHGLVRPRVGRIEKVWVRDGAAYFYGPIFIHPEETEHEPTKMFYKKEVFLSNLEETCPMSCILGKCAVLSFKDFLSCRPTEIPENDILLCESRYNESDKQMKKFKGLKRFSLSAKVVDDEIYYFRKPIIPQKEPSPLLEKKIQLLEAKFAELEGGDDDIEEMGEEDSEVIEAPSLPQLQTPLANELDLMPYTPPQSTPKSAKGSAKKESSKRKINMSGYILFSSEMRAVIKAQHPDYSFGELSRLVGTEWRNLETAKKAEYEGMMGGYPPGLPPLQGPVDGLVSMGSMQPLHPGGPPPHHLPPGVPGLPGIPPPGVMNQGVAPMVGTPAPGGSPYGQQVGVLGPPGQQAPPPYPGPHPAGPPVIQQPTTPMFVAPPPKTQRLLHSEAYLKYIEGLSAESNSISKWDQTLAARRRDVHLSKEQESRLPSHWLKSKGAHTTMADALWRLRDLMLRDTLNIRQAYNLENV</sequence>
<protein>
    <recommendedName>
        <fullName>Protein polybromo-1</fullName>
    </recommendedName>
    <alternativeName>
        <fullName>BRG1-associated factor 180</fullName>
        <shortName>BAF180</shortName>
    </alternativeName>
</protein>
<proteinExistence type="evidence at protein level"/>
<gene>
    <name type="primary">Pbrm1</name>
    <name type="synonym">Baf180</name>
    <name type="synonym">Pb1</name>
</gene>